<evidence type="ECO:0000255" key="1">
    <source>
        <dbReference type="HAMAP-Rule" id="MF_01562"/>
    </source>
</evidence>
<sequence length="314" mass="33666">MTMIGPIIIAVLIIIFLIVFFTLVPVGLWISALSARVPVGLGTLIGMRLRRVVPSRVVKPLIKAVKAGLDLEVNQLESHYLAGGDVDNTVDALIAAHRANIELDFSRAAAIDLAGRDVLEAVQTSVTPKVIRTPEFTGVAQNGVEVKVITQITVQSNIERIVGGAGEDTVIARVGEAVVSTVGETREHTDVLENPNSISKKVQEQGLGDGTAYTILSIDIAEMRIGDNIKAKLDIEKANADMEVAQAAASKRKAEAIALEQENRAAVVAAEAEVPRALSRALEEGNLGVMDYYKMENVQSDTAMRESIAHEDEK</sequence>
<gene>
    <name evidence="1" type="primary">floA</name>
    <name type="ordered locus">lmo0392</name>
</gene>
<accession>Q92EP8</accession>
<proteinExistence type="inferred from homology"/>
<dbReference type="EMBL" id="AL591975">
    <property type="protein sequence ID" value="CAC98471.1"/>
    <property type="molecule type" value="Genomic_DNA"/>
</dbReference>
<dbReference type="PIR" id="AI1123">
    <property type="entry name" value="AI1123"/>
</dbReference>
<dbReference type="RefSeq" id="NP_463922.1">
    <property type="nucleotide sequence ID" value="NC_003210.1"/>
</dbReference>
<dbReference type="RefSeq" id="WP_003723104.1">
    <property type="nucleotide sequence ID" value="NZ_CP149495.1"/>
</dbReference>
<dbReference type="STRING" id="169963.gene:17593043"/>
<dbReference type="PaxDb" id="169963-lmo0392"/>
<dbReference type="EnsemblBacteria" id="CAC98471">
    <property type="protein sequence ID" value="CAC98471"/>
    <property type="gene ID" value="CAC98471"/>
</dbReference>
<dbReference type="GeneID" id="93233861"/>
<dbReference type="GeneID" id="987651"/>
<dbReference type="KEGG" id="lmo:lmo0392"/>
<dbReference type="PATRIC" id="fig|169963.11.peg.405"/>
<dbReference type="eggNOG" id="COG4864">
    <property type="taxonomic scope" value="Bacteria"/>
</dbReference>
<dbReference type="HOGENOM" id="CLU_836378_0_0_9"/>
<dbReference type="OrthoDB" id="9808365at2"/>
<dbReference type="PhylomeDB" id="Q92EP8"/>
<dbReference type="BioCyc" id="LMON169963:LMO0392-MONOMER"/>
<dbReference type="Proteomes" id="UP000000817">
    <property type="component" value="Chromosome"/>
</dbReference>
<dbReference type="GO" id="GO:0045121">
    <property type="term" value="C:membrane raft"/>
    <property type="evidence" value="ECO:0007669"/>
    <property type="project" value="UniProtKB-SubCell"/>
</dbReference>
<dbReference type="GO" id="GO:0005886">
    <property type="term" value="C:plasma membrane"/>
    <property type="evidence" value="ECO:0007669"/>
    <property type="project" value="UniProtKB-SubCell"/>
</dbReference>
<dbReference type="HAMAP" id="MF_01562">
    <property type="entry name" value="FloA"/>
    <property type="match status" value="1"/>
</dbReference>
<dbReference type="InterPro" id="IPR022853">
    <property type="entry name" value="FloA"/>
</dbReference>
<dbReference type="NCBIfam" id="NF010186">
    <property type="entry name" value="PRK13665.1"/>
    <property type="match status" value="1"/>
</dbReference>
<dbReference type="Pfam" id="PF12127">
    <property type="entry name" value="FloA"/>
    <property type="match status" value="1"/>
</dbReference>
<feature type="chain" id="PRO_0000232553" description="Flotillin-like protein FloA">
    <location>
        <begin position="1"/>
        <end position="314"/>
    </location>
</feature>
<feature type="transmembrane region" description="Helical" evidence="1">
    <location>
        <begin position="4"/>
        <end position="24"/>
    </location>
</feature>
<organism>
    <name type="scientific">Listeria monocytogenes serovar 1/2a (strain ATCC BAA-679 / EGD-e)</name>
    <dbReference type="NCBI Taxonomy" id="169963"/>
    <lineage>
        <taxon>Bacteria</taxon>
        <taxon>Bacillati</taxon>
        <taxon>Bacillota</taxon>
        <taxon>Bacilli</taxon>
        <taxon>Bacillales</taxon>
        <taxon>Listeriaceae</taxon>
        <taxon>Listeria</taxon>
    </lineage>
</organism>
<comment type="function">
    <text evidence="1">Found in functional membrane microdomains (FMM) that may be equivalent to eukaryotic membrane rafts. FMMs are highly dynamic and increase in number as cells age. Flotillins are thought to be important factors in membrane fluidity.</text>
</comment>
<comment type="subunit">
    <text evidence="1">Homooligomerizes.</text>
</comment>
<comment type="subcellular location">
    <subcellularLocation>
        <location evidence="1">Cell membrane</location>
        <topology evidence="1">Single-pass membrane protein</topology>
    </subcellularLocation>
    <subcellularLocation>
        <location evidence="1">Membrane raft</location>
        <topology evidence="1">Single-pass membrane protein</topology>
    </subcellularLocation>
</comment>
<comment type="similarity">
    <text evidence="1">Belongs to the flotillin-like FloA family.</text>
</comment>
<name>FLOA_LISMO</name>
<keyword id="KW-1003">Cell membrane</keyword>
<keyword id="KW-0472">Membrane</keyword>
<keyword id="KW-1185">Reference proteome</keyword>
<keyword id="KW-0812">Transmembrane</keyword>
<keyword id="KW-1133">Transmembrane helix</keyword>
<reference key="1">
    <citation type="journal article" date="2001" name="Science">
        <title>Comparative genomics of Listeria species.</title>
        <authorList>
            <person name="Glaser P."/>
            <person name="Frangeul L."/>
            <person name="Buchrieser C."/>
            <person name="Rusniok C."/>
            <person name="Amend A."/>
            <person name="Baquero F."/>
            <person name="Berche P."/>
            <person name="Bloecker H."/>
            <person name="Brandt P."/>
            <person name="Chakraborty T."/>
            <person name="Charbit A."/>
            <person name="Chetouani F."/>
            <person name="Couve E."/>
            <person name="de Daruvar A."/>
            <person name="Dehoux P."/>
            <person name="Domann E."/>
            <person name="Dominguez-Bernal G."/>
            <person name="Duchaud E."/>
            <person name="Durant L."/>
            <person name="Dussurget O."/>
            <person name="Entian K.-D."/>
            <person name="Fsihi H."/>
            <person name="Garcia-del Portillo F."/>
            <person name="Garrido P."/>
            <person name="Gautier L."/>
            <person name="Goebel W."/>
            <person name="Gomez-Lopez N."/>
            <person name="Hain T."/>
            <person name="Hauf J."/>
            <person name="Jackson D."/>
            <person name="Jones L.-M."/>
            <person name="Kaerst U."/>
            <person name="Kreft J."/>
            <person name="Kuhn M."/>
            <person name="Kunst F."/>
            <person name="Kurapkat G."/>
            <person name="Madueno E."/>
            <person name="Maitournam A."/>
            <person name="Mata Vicente J."/>
            <person name="Ng E."/>
            <person name="Nedjari H."/>
            <person name="Nordsiek G."/>
            <person name="Novella S."/>
            <person name="de Pablos B."/>
            <person name="Perez-Diaz J.-C."/>
            <person name="Purcell R."/>
            <person name="Remmel B."/>
            <person name="Rose M."/>
            <person name="Schlueter T."/>
            <person name="Simoes N."/>
            <person name="Tierrez A."/>
            <person name="Vazquez-Boland J.-A."/>
            <person name="Voss H."/>
            <person name="Wehland J."/>
            <person name="Cossart P."/>
        </authorList>
    </citation>
    <scope>NUCLEOTIDE SEQUENCE [LARGE SCALE GENOMIC DNA]</scope>
    <source>
        <strain>ATCC BAA-679 / EGD-e</strain>
    </source>
</reference>
<protein>
    <recommendedName>
        <fullName evidence="1">Flotillin-like protein FloA</fullName>
    </recommendedName>
</protein>